<comment type="function">
    <text evidence="1">Cell wall formation. Catalyzes the transfer of a GlcNAc subunit on undecaprenyl-pyrophosphoryl-MurNAc-pentapeptide (lipid intermediate I) to form undecaprenyl-pyrophosphoryl-MurNAc-(pentapeptide)GlcNAc (lipid intermediate II).</text>
</comment>
<comment type="catalytic activity">
    <reaction evidence="1">
        <text>di-trans,octa-cis-undecaprenyl diphospho-N-acetyl-alpha-D-muramoyl-L-alanyl-D-glutamyl-meso-2,6-diaminopimeloyl-D-alanyl-D-alanine + UDP-N-acetyl-alpha-D-glucosamine = di-trans,octa-cis-undecaprenyl diphospho-[N-acetyl-alpha-D-glucosaminyl-(1-&gt;4)]-N-acetyl-alpha-D-muramoyl-L-alanyl-D-glutamyl-meso-2,6-diaminopimeloyl-D-alanyl-D-alanine + UDP + H(+)</text>
        <dbReference type="Rhea" id="RHEA:31227"/>
        <dbReference type="ChEBI" id="CHEBI:15378"/>
        <dbReference type="ChEBI" id="CHEBI:57705"/>
        <dbReference type="ChEBI" id="CHEBI:58223"/>
        <dbReference type="ChEBI" id="CHEBI:61387"/>
        <dbReference type="ChEBI" id="CHEBI:61388"/>
        <dbReference type="EC" id="2.4.1.227"/>
    </reaction>
</comment>
<comment type="pathway">
    <text evidence="1">Cell wall biogenesis; peptidoglycan biosynthesis.</text>
</comment>
<comment type="subcellular location">
    <subcellularLocation>
        <location evidence="1">Cell inner membrane</location>
        <topology evidence="1">Peripheral membrane protein</topology>
        <orientation evidence="1">Cytoplasmic side</orientation>
    </subcellularLocation>
</comment>
<comment type="similarity">
    <text evidence="1">Belongs to the glycosyltransferase 28 family. MurG subfamily.</text>
</comment>
<reference key="1">
    <citation type="journal article" date="2011" name="Stand. Genomic Sci.">
        <title>Complete genome sequence of the halophilic and highly halotolerant Chromohalobacter salexigens type strain (1H11(T)).</title>
        <authorList>
            <person name="Copeland A."/>
            <person name="O'Connor K."/>
            <person name="Lucas S."/>
            <person name="Lapidus A."/>
            <person name="Berry K.W."/>
            <person name="Detter J.C."/>
            <person name="Del Rio T.G."/>
            <person name="Hammon N."/>
            <person name="Dalin E."/>
            <person name="Tice H."/>
            <person name="Pitluck S."/>
            <person name="Bruce D."/>
            <person name="Goodwin L."/>
            <person name="Han C."/>
            <person name="Tapia R."/>
            <person name="Saunders E."/>
            <person name="Schmutz J."/>
            <person name="Brettin T."/>
            <person name="Larimer F."/>
            <person name="Land M."/>
            <person name="Hauser L."/>
            <person name="Vargas C."/>
            <person name="Nieto J.J."/>
            <person name="Kyrpides N.C."/>
            <person name="Ivanova N."/>
            <person name="Goker M."/>
            <person name="Klenk H.P."/>
            <person name="Csonka L.N."/>
            <person name="Woyke T."/>
        </authorList>
    </citation>
    <scope>NUCLEOTIDE SEQUENCE [LARGE SCALE GENOMIC DNA]</scope>
    <source>
        <strain>ATCC BAA-138 / DSM 3043 / CIP 106854 / NCIMB 13768 / 1H11</strain>
    </source>
</reference>
<keyword id="KW-0131">Cell cycle</keyword>
<keyword id="KW-0132">Cell division</keyword>
<keyword id="KW-0997">Cell inner membrane</keyword>
<keyword id="KW-1003">Cell membrane</keyword>
<keyword id="KW-0133">Cell shape</keyword>
<keyword id="KW-0961">Cell wall biogenesis/degradation</keyword>
<keyword id="KW-0328">Glycosyltransferase</keyword>
<keyword id="KW-0472">Membrane</keyword>
<keyword id="KW-0573">Peptidoglycan synthesis</keyword>
<keyword id="KW-1185">Reference proteome</keyword>
<keyword id="KW-0808">Transferase</keyword>
<gene>
    <name evidence="1" type="primary">murG</name>
    <name type="ordered locus">Csal_2190</name>
</gene>
<feature type="chain" id="PRO_0000315084" description="UDP-N-acetylglucosamine--N-acetylmuramyl-(pentapeptide) pyrophosphoryl-undecaprenol N-acetylglucosamine transferase">
    <location>
        <begin position="1"/>
        <end position="364"/>
    </location>
</feature>
<feature type="binding site" evidence="1">
    <location>
        <begin position="16"/>
        <end position="18"/>
    </location>
    <ligand>
        <name>UDP-N-acetyl-alpha-D-glucosamine</name>
        <dbReference type="ChEBI" id="CHEBI:57705"/>
    </ligand>
</feature>
<feature type="binding site" evidence="1">
    <location>
        <position position="128"/>
    </location>
    <ligand>
        <name>UDP-N-acetyl-alpha-D-glucosamine</name>
        <dbReference type="ChEBI" id="CHEBI:57705"/>
    </ligand>
</feature>
<feature type="binding site" evidence="1">
    <location>
        <position position="166"/>
    </location>
    <ligand>
        <name>UDP-N-acetyl-alpha-D-glucosamine</name>
        <dbReference type="ChEBI" id="CHEBI:57705"/>
    </ligand>
</feature>
<feature type="binding site" evidence="1">
    <location>
        <position position="195"/>
    </location>
    <ligand>
        <name>UDP-N-acetyl-alpha-D-glucosamine</name>
        <dbReference type="ChEBI" id="CHEBI:57705"/>
    </ligand>
</feature>
<feature type="binding site" evidence="1">
    <location>
        <position position="249"/>
    </location>
    <ligand>
        <name>UDP-N-acetyl-alpha-D-glucosamine</name>
        <dbReference type="ChEBI" id="CHEBI:57705"/>
    </ligand>
</feature>
<feature type="binding site" evidence="1">
    <location>
        <position position="294"/>
    </location>
    <ligand>
        <name>UDP-N-acetyl-alpha-D-glucosamine</name>
        <dbReference type="ChEBI" id="CHEBI:57705"/>
    </ligand>
</feature>
<protein>
    <recommendedName>
        <fullName evidence="1">UDP-N-acetylglucosamine--N-acetylmuramyl-(pentapeptide) pyrophosphoryl-undecaprenol N-acetylglucosamine transferase</fullName>
        <ecNumber evidence="1">2.4.1.227</ecNumber>
    </recommendedName>
    <alternativeName>
        <fullName evidence="1">Undecaprenyl-PP-MurNAc-pentapeptide-UDPGlcNAc GlcNAc transferase</fullName>
    </alternativeName>
</protein>
<dbReference type="EC" id="2.4.1.227" evidence="1"/>
<dbReference type="EMBL" id="CP000285">
    <property type="protein sequence ID" value="ABE59541.1"/>
    <property type="molecule type" value="Genomic_DNA"/>
</dbReference>
<dbReference type="RefSeq" id="WP_011507487.1">
    <property type="nucleotide sequence ID" value="NC_007963.1"/>
</dbReference>
<dbReference type="SMR" id="Q1QVG7"/>
<dbReference type="STRING" id="290398.Csal_2190"/>
<dbReference type="CAZy" id="GT28">
    <property type="family name" value="Glycosyltransferase Family 28"/>
</dbReference>
<dbReference type="GeneID" id="95334908"/>
<dbReference type="KEGG" id="csa:Csal_2190"/>
<dbReference type="eggNOG" id="COG0707">
    <property type="taxonomic scope" value="Bacteria"/>
</dbReference>
<dbReference type="HOGENOM" id="CLU_037404_2_0_6"/>
<dbReference type="OrthoDB" id="9808936at2"/>
<dbReference type="UniPathway" id="UPA00219"/>
<dbReference type="Proteomes" id="UP000000239">
    <property type="component" value="Chromosome"/>
</dbReference>
<dbReference type="GO" id="GO:0005886">
    <property type="term" value="C:plasma membrane"/>
    <property type="evidence" value="ECO:0007669"/>
    <property type="project" value="UniProtKB-SubCell"/>
</dbReference>
<dbReference type="GO" id="GO:0051991">
    <property type="term" value="F:UDP-N-acetyl-D-glucosamine:N-acetylmuramoyl-L-alanyl-D-glutamyl-meso-2,6-diaminopimelyl-D-alanyl-D-alanine-diphosphoundecaprenol 4-beta-N-acetylglucosaminlytransferase activity"/>
    <property type="evidence" value="ECO:0007669"/>
    <property type="project" value="RHEA"/>
</dbReference>
<dbReference type="GO" id="GO:0050511">
    <property type="term" value="F:undecaprenyldiphospho-muramoylpentapeptide beta-N-acetylglucosaminyltransferase activity"/>
    <property type="evidence" value="ECO:0007669"/>
    <property type="project" value="UniProtKB-UniRule"/>
</dbReference>
<dbReference type="GO" id="GO:0005975">
    <property type="term" value="P:carbohydrate metabolic process"/>
    <property type="evidence" value="ECO:0007669"/>
    <property type="project" value="InterPro"/>
</dbReference>
<dbReference type="GO" id="GO:0051301">
    <property type="term" value="P:cell division"/>
    <property type="evidence" value="ECO:0007669"/>
    <property type="project" value="UniProtKB-KW"/>
</dbReference>
<dbReference type="GO" id="GO:0071555">
    <property type="term" value="P:cell wall organization"/>
    <property type="evidence" value="ECO:0007669"/>
    <property type="project" value="UniProtKB-KW"/>
</dbReference>
<dbReference type="GO" id="GO:0030259">
    <property type="term" value="P:lipid glycosylation"/>
    <property type="evidence" value="ECO:0007669"/>
    <property type="project" value="UniProtKB-UniRule"/>
</dbReference>
<dbReference type="GO" id="GO:0009252">
    <property type="term" value="P:peptidoglycan biosynthetic process"/>
    <property type="evidence" value="ECO:0007669"/>
    <property type="project" value="UniProtKB-UniRule"/>
</dbReference>
<dbReference type="GO" id="GO:0008360">
    <property type="term" value="P:regulation of cell shape"/>
    <property type="evidence" value="ECO:0007669"/>
    <property type="project" value="UniProtKB-KW"/>
</dbReference>
<dbReference type="CDD" id="cd03785">
    <property type="entry name" value="GT28_MurG"/>
    <property type="match status" value="1"/>
</dbReference>
<dbReference type="Gene3D" id="3.40.50.2000">
    <property type="entry name" value="Glycogen Phosphorylase B"/>
    <property type="match status" value="2"/>
</dbReference>
<dbReference type="HAMAP" id="MF_00033">
    <property type="entry name" value="MurG"/>
    <property type="match status" value="1"/>
</dbReference>
<dbReference type="InterPro" id="IPR006009">
    <property type="entry name" value="GlcNAc_MurG"/>
</dbReference>
<dbReference type="InterPro" id="IPR007235">
    <property type="entry name" value="Glyco_trans_28_C"/>
</dbReference>
<dbReference type="InterPro" id="IPR004276">
    <property type="entry name" value="GlycoTrans_28_N"/>
</dbReference>
<dbReference type="NCBIfam" id="TIGR01133">
    <property type="entry name" value="murG"/>
    <property type="match status" value="1"/>
</dbReference>
<dbReference type="PANTHER" id="PTHR21015:SF22">
    <property type="entry name" value="GLYCOSYLTRANSFERASE"/>
    <property type="match status" value="1"/>
</dbReference>
<dbReference type="PANTHER" id="PTHR21015">
    <property type="entry name" value="UDP-N-ACETYLGLUCOSAMINE--N-ACETYLMURAMYL-(PENTAPEPTIDE) PYROPHOSPHORYL-UNDECAPRENOL N-ACETYLGLUCOSAMINE TRANSFERASE 1"/>
    <property type="match status" value="1"/>
</dbReference>
<dbReference type="Pfam" id="PF04101">
    <property type="entry name" value="Glyco_tran_28_C"/>
    <property type="match status" value="1"/>
</dbReference>
<dbReference type="Pfam" id="PF03033">
    <property type="entry name" value="Glyco_transf_28"/>
    <property type="match status" value="1"/>
</dbReference>
<dbReference type="SUPFAM" id="SSF53756">
    <property type="entry name" value="UDP-Glycosyltransferase/glycogen phosphorylase"/>
    <property type="match status" value="1"/>
</dbReference>
<evidence type="ECO:0000255" key="1">
    <source>
        <dbReference type="HAMAP-Rule" id="MF_00033"/>
    </source>
</evidence>
<sequence>MSYREVSRVLIMAGGTGGHVVPALSLARALRARGVSVEWLGSPRGIENRLVPAADIVLHRIQVAGLRGNGMAGWLLAPWRLAKAVWQARQVIAKFDPQLVVGLGGFASGPGGLAAWLMRRRLIVHEQNAVAGMTNRYLSRLADGVYAAFPGAFGAHRAEVVGNPVRDDIAALGETPRGSDALRQRPLRLLVLGGSLGAQALNTQVPQALARLPAAQRPDVRHQAGRDKETATQSVYAEAGVEAEVSAFIDDMAAAYDWADLIVCRAGALTIAELAAAAKPSILVPFPHAVDDHQTLNARQLVDAGAARLMPQTQLTAESLAETLATLLEPETLATMATSARAQARLDAVERLVAGCMEANRDSQ</sequence>
<name>MURG_CHRSD</name>
<proteinExistence type="inferred from homology"/>
<accession>Q1QVG7</accession>
<organism>
    <name type="scientific">Chromohalobacter salexigens (strain ATCC BAA-138 / DSM 3043 / CIP 106854 / NCIMB 13768 / 1H11)</name>
    <dbReference type="NCBI Taxonomy" id="290398"/>
    <lineage>
        <taxon>Bacteria</taxon>
        <taxon>Pseudomonadati</taxon>
        <taxon>Pseudomonadota</taxon>
        <taxon>Gammaproteobacteria</taxon>
        <taxon>Oceanospirillales</taxon>
        <taxon>Halomonadaceae</taxon>
        <taxon>Chromohalobacter</taxon>
    </lineage>
</organism>